<name>MRCKA_RAT</name>
<reference evidence="19 20" key="1">
    <citation type="journal article" date="1998" name="Mol. Cell. Biol.">
        <title>Myotonic dystrophy kinase-related Cdc42-binding kinase acts as a Cdc42 effector in promoting cytoskeletal reorganization.</title>
        <authorList>
            <person name="Leung T."/>
            <person name="Chen X.-Q."/>
            <person name="Tan I."/>
            <person name="Manser E."/>
            <person name="Lim L."/>
        </authorList>
    </citation>
    <scope>NUCLEOTIDE SEQUENCE [MRNA]</scope>
    <scope>FUNCTION</scope>
    <scope>TISSUE SPECIFICITY</scope>
    <scope>SUBCELLULAR LOCATION</scope>
    <scope>MUTAGENESIS OF LYS-106</scope>
    <source>
        <tissue evidence="20">Brain</tissue>
    </source>
</reference>
<reference evidence="19" key="2">
    <citation type="journal article" date="2001" name="Mol. Cell. Biol.">
        <title>Intermolecular and intramolecular interactions regulate catalytic activity of myotonic dystrophy kinase-related Cdc42-binding kinase alpha.</title>
        <authorList>
            <person name="Tan I."/>
            <person name="Seow K.T."/>
            <person name="Lim L."/>
            <person name="Leung T."/>
        </authorList>
    </citation>
    <scope>OLIGOMERIZATION</scope>
</reference>
<reference key="3">
    <citation type="journal article" date="2003" name="Gene">
        <title>Genomic organization of human myotonic dystrophy kinase-related Cdc42-binding kinase alpha reveals multiple alternative splicing and functional diversity.</title>
        <authorList>
            <person name="Tan I."/>
            <person name="Cheong A."/>
            <person name="Lim L."/>
            <person name="Leung T."/>
        </authorList>
    </citation>
    <scope>ALTERNATIVE SPLICING</scope>
</reference>
<reference key="4">
    <citation type="journal article" date="2006" name="Proc. Natl. Acad. Sci. U.S.A.">
        <title>Quantitative phosphoproteomics of vasopressin-sensitive renal cells: regulation of aquaporin-2 phosphorylation at two sites.</title>
        <authorList>
            <person name="Hoffert J.D."/>
            <person name="Pisitkun T."/>
            <person name="Wang G."/>
            <person name="Shen R.-F."/>
            <person name="Knepper M.A."/>
        </authorList>
    </citation>
    <scope>PHOSPHORYLATION [LARGE SCALE ANALYSIS] AT SER-1127</scope>
    <scope>IDENTIFICATION BY MASS SPECTROMETRY [LARGE SCALE ANALYSIS]</scope>
</reference>
<reference key="5">
    <citation type="journal article" date="2008" name="Cell">
        <title>A tripartite complex containing MRCK modulates lamellar actomyosin retrograde flow.</title>
        <authorList>
            <person name="Tan I."/>
            <person name="Yong J."/>
            <person name="Dong J.M."/>
            <person name="Lim L."/>
            <person name="Leung T."/>
        </authorList>
    </citation>
    <scope>FUNCTION</scope>
    <scope>INTERACTION WITH MYO18A AND LURAP1</scope>
</reference>
<reference key="6">
    <citation type="journal article" date="2011" name="FEBS Lett.">
        <title>Chelerythrine perturbs lamellar actomyosin filaments by selective inhibition of myotonic dystrophy kinase-related Cdc42-binding kinase.</title>
        <authorList>
            <person name="Tan I."/>
            <person name="Lai J."/>
            <person name="Yong J."/>
            <person name="Li S.F."/>
            <person name="Leung T."/>
        </authorList>
    </citation>
    <scope>FUNCTION IN PHOSPHORYLATION OF PPP1R12A AND MYL9/MLC2</scope>
    <scope>ACTIVITY REGULATION</scope>
</reference>
<reference key="7">
    <citation type="journal article" date="2012" name="Nat. Commun.">
        <title>Quantitative maps of protein phosphorylation sites across 14 different rat organs and tissues.</title>
        <authorList>
            <person name="Lundby A."/>
            <person name="Secher A."/>
            <person name="Lage K."/>
            <person name="Nordsborg N.B."/>
            <person name="Dmytriyev A."/>
            <person name="Lundby C."/>
            <person name="Olsen J.V."/>
        </authorList>
    </citation>
    <scope>PHOSPHORYLATION [LARGE SCALE ANALYSIS] AT SER-1651 AND SER-1721</scope>
    <scope>IDENTIFICATION BY MASS SPECTROMETRY [LARGE SCALE ANALYSIS]</scope>
</reference>
<reference key="8">
    <citation type="journal article" date="2014" name="J. Biol. Chem.">
        <title>Adaptor protein LRAP25 mediates myotonic dystrophy kinase-related Cdc42-binding kinase (MRCK) regulation of LIMK1 protein in lamellipodial F-actin dynamics.</title>
        <authorList>
            <person name="Lee I.C."/>
            <person name="Leung T."/>
            <person name="Tan I."/>
        </authorList>
    </citation>
    <scope>INTERACTION WITH FAM89B AND LURAP1</scope>
    <source>
        <tissue>Brain</tissue>
    </source>
</reference>
<comment type="function">
    <text evidence="3 4 15 16 18">Serine/threonine-protein kinase which is an important downstream effector of CDC42 and plays a role in the regulation of cytoskeleton reorganization and cell migration (PubMed:9418861). Regulates actin cytoskeletal reorganization via phosphorylation of PPP1R12A and MYL9/MLC2 (PubMed:21457715). In concert with MYO18A and LURAP1, is involved in modulating lamellar actomyosin retrograde flow that is crucial to cell protrusion and migration (PubMed:18854160). Phosphorylates: PPP1R12C, LIMK1 and LIMK2. May play a role in TFRC-mediated iron uptake. In concert with FAM89B/LRAP25 mediates the targeting of LIMK1 to the lamellipodium resulting in its activation and subsequent phosphorylation of CFL1 which is important for lamellipodial F-actin regulation (By similarity). Triggers the formation of an extrusion apical actin ring required for epithelial extrusion of apoptotic cells (By similarity).</text>
</comment>
<comment type="catalytic activity">
    <reaction evidence="18">
        <text>L-seryl-[protein] + ATP = O-phospho-L-seryl-[protein] + ADP + H(+)</text>
        <dbReference type="Rhea" id="RHEA:17989"/>
        <dbReference type="Rhea" id="RHEA-COMP:9863"/>
        <dbReference type="Rhea" id="RHEA-COMP:11604"/>
        <dbReference type="ChEBI" id="CHEBI:15378"/>
        <dbReference type="ChEBI" id="CHEBI:29999"/>
        <dbReference type="ChEBI" id="CHEBI:30616"/>
        <dbReference type="ChEBI" id="CHEBI:83421"/>
        <dbReference type="ChEBI" id="CHEBI:456216"/>
        <dbReference type="EC" id="2.7.11.1"/>
    </reaction>
</comment>
<comment type="catalytic activity">
    <reaction evidence="18">
        <text>L-threonyl-[protein] + ATP = O-phospho-L-threonyl-[protein] + ADP + H(+)</text>
        <dbReference type="Rhea" id="RHEA:46608"/>
        <dbReference type="Rhea" id="RHEA-COMP:11060"/>
        <dbReference type="Rhea" id="RHEA-COMP:11605"/>
        <dbReference type="ChEBI" id="CHEBI:15378"/>
        <dbReference type="ChEBI" id="CHEBI:30013"/>
        <dbReference type="ChEBI" id="CHEBI:30616"/>
        <dbReference type="ChEBI" id="CHEBI:61977"/>
        <dbReference type="ChEBI" id="CHEBI:456216"/>
        <dbReference type="EC" id="2.7.11.1"/>
    </reaction>
</comment>
<comment type="cofactor">
    <cofactor evidence="18">
        <name>Mg(2+)</name>
        <dbReference type="ChEBI" id="CHEBI:18420"/>
    </cofactor>
</comment>
<comment type="activity regulation">
    <text evidence="1 16">Maintained in an inactive, closed conformation by an interaction between the kinase domain and the negative autoregulatory C-terminal coiled-coil region. Agonist binding to the phorbol ester binding site disrupts this, releasing the kinase domain to allow N-terminus-mediated dimerization and kinase activation by transautophosphorylation (By similarity). Inhibited by chelerythrine chloride.</text>
</comment>
<comment type="subunit">
    <text evidence="3 4 14 15 17">Homodimer and homotetramer via the coiled coil regions (PubMed:11283256). Interacts tightly with GTP-bound but not GDP-bound CDC42 (By similarity). Forms a tripartite complex with MYO18A and LURAP1 with the latter acting as an adapter connecting CDC42BPA and MYO18A. LURAP1 binding results in activation of CDC42BPA by abolition of its negative autoregulation (PubMed:18854160). Interacts with LURAP1 (PubMed:25107909). Interacts (via AGC-kinase C-terminal domain) with FAM89B/LRAP25 (via LRR repeat) (PubMed:25107909). Forms a tripartite complex with FAM89B/LRAP25 and LIMK1 (By similarity).</text>
</comment>
<comment type="interaction">
    <interactant intactId="EBI-689253">
        <id>O54874</id>
    </interactant>
    <interactant intactId="EBI-689253">
        <id>O54874</id>
        <label>Cdc42bpa</label>
    </interactant>
    <organismsDiffer>false</organismsDiffer>
    <experiments>2</experiments>
</comment>
<comment type="interaction">
    <interactant intactId="EBI-689253">
        <id>O54874</id>
    </interactant>
    <interactant intactId="EBI-2015467">
        <id>D4A8G3</id>
        <label>Lurap1</label>
    </interactant>
    <organismsDiffer>false</organismsDiffer>
    <experiments>8</experiments>
</comment>
<comment type="subcellular location">
    <subcellularLocation>
        <location evidence="18">Cytoplasm</location>
    </subcellularLocation>
    <subcellularLocation>
        <location evidence="3">Cell projection</location>
        <location evidence="3">Lamellipodium</location>
    </subcellularLocation>
    <text evidence="3 18">Displays a dispersed punctate distribution and concentrates along the cell periphery, especially at the leading edge and cell-cell junction. This concentration is PH-domain dependent (PubMed:9418861). Localizes in the lamellipodium in a FAM89B/LRAP25-dependent manner (By similarity).</text>
</comment>
<comment type="alternative products">
    <event type="alternative splicing"/>
    <isoform>
        <id>O54874-1</id>
        <name>1</name>
        <sequence type="displayed"/>
    </isoform>
    <isoform>
        <id>O54874-2</id>
        <name>2</name>
        <sequence type="not described"/>
    </isoform>
    <isoform>
        <id>O54874-3</id>
        <name>3</name>
        <sequence type="not described"/>
    </isoform>
    <isoform>
        <id>O54874-4</id>
        <name>4</name>
        <sequence type="not described"/>
    </isoform>
    <isoform>
        <id>O54874-5</id>
        <name>5</name>
        <sequence type="not described"/>
    </isoform>
    <isoform>
        <id>O54874-6</id>
        <name>6</name>
        <sequence type="not described"/>
    </isoform>
</comment>
<comment type="tissue specificity">
    <text evidence="18">Highly expressed in the brain and lung and present in lower levels in all other tissues tested.</text>
</comment>
<comment type="PTM">
    <text evidence="4">Proteolytically cleaved by caspases upon apoptosis induction. The cleavage at Asp-478 by CASP3 increases its kinase activity (in vitro).</text>
</comment>
<comment type="similarity">
    <text evidence="19">Belongs to the protein kinase superfamily. AGC Ser/Thr protein kinase family. DMPK subfamily.</text>
</comment>
<gene>
    <name evidence="4" type="primary">Cdc42bpa</name>
    <name evidence="21" type="synonym">Pk428</name>
</gene>
<organism>
    <name type="scientific">Rattus norvegicus</name>
    <name type="common">Rat</name>
    <dbReference type="NCBI Taxonomy" id="10116"/>
    <lineage>
        <taxon>Eukaryota</taxon>
        <taxon>Metazoa</taxon>
        <taxon>Chordata</taxon>
        <taxon>Craniata</taxon>
        <taxon>Vertebrata</taxon>
        <taxon>Euteleostomi</taxon>
        <taxon>Mammalia</taxon>
        <taxon>Eutheria</taxon>
        <taxon>Euarchontoglires</taxon>
        <taxon>Glires</taxon>
        <taxon>Rodentia</taxon>
        <taxon>Myomorpha</taxon>
        <taxon>Muroidea</taxon>
        <taxon>Muridae</taxon>
        <taxon>Murinae</taxon>
        <taxon>Rattus</taxon>
    </lineage>
</organism>
<feature type="chain" id="PRO_0000086393" description="Serine/threonine-protein kinase MRCK alpha">
    <location>
        <begin position="1"/>
        <end position="1732"/>
    </location>
</feature>
<feature type="domain" description="Protein kinase" evidence="8 18">
    <location>
        <begin position="77"/>
        <end position="343"/>
    </location>
</feature>
<feature type="domain" description="AGC-kinase C-terminal" evidence="10">
    <location>
        <begin position="344"/>
        <end position="414"/>
    </location>
</feature>
<feature type="domain" description="PH" evidence="7">
    <location>
        <begin position="1082"/>
        <end position="1201"/>
    </location>
</feature>
<feature type="domain" description="CNH" evidence="11">
    <location>
        <begin position="1227"/>
        <end position="1499"/>
    </location>
</feature>
<feature type="domain" description="CRIB" evidence="6">
    <location>
        <begin position="1571"/>
        <end position="1584"/>
    </location>
</feature>
<feature type="zinc finger region" description="Phorbol-ester/DAG-type" evidence="9">
    <location>
        <begin position="1012"/>
        <end position="1062"/>
    </location>
</feature>
<feature type="region of interest" description="Disordered" evidence="13">
    <location>
        <begin position="973"/>
        <end position="1002"/>
    </location>
</feature>
<feature type="region of interest" description="Disordered" evidence="13">
    <location>
        <begin position="1592"/>
        <end position="1732"/>
    </location>
</feature>
<feature type="coiled-coil region" evidence="5">
    <location>
        <begin position="437"/>
        <end position="670"/>
    </location>
</feature>
<feature type="coiled-coil region" evidence="5">
    <location>
        <begin position="713"/>
        <end position="820"/>
    </location>
</feature>
<feature type="coiled-coil region" evidence="5">
    <location>
        <begin position="880"/>
        <end position="943"/>
    </location>
</feature>
<feature type="compositionally biased region" description="Polar residues" evidence="13">
    <location>
        <begin position="1604"/>
        <end position="1619"/>
    </location>
</feature>
<feature type="compositionally biased region" description="Low complexity" evidence="13">
    <location>
        <begin position="1625"/>
        <end position="1640"/>
    </location>
</feature>
<feature type="compositionally biased region" description="Low complexity" evidence="13">
    <location>
        <begin position="1665"/>
        <end position="1674"/>
    </location>
</feature>
<feature type="active site" description="Proton acceptor" evidence="2 8 12">
    <location>
        <position position="201"/>
    </location>
</feature>
<feature type="binding site" evidence="2 8">
    <location>
        <begin position="83"/>
        <end position="91"/>
    </location>
    <ligand>
        <name>ATP</name>
        <dbReference type="ChEBI" id="CHEBI:30616"/>
    </ligand>
</feature>
<feature type="binding site" evidence="8 18">
    <location>
        <position position="106"/>
    </location>
    <ligand>
        <name>ATP</name>
        <dbReference type="ChEBI" id="CHEBI:30616"/>
    </ligand>
</feature>
<feature type="site" description="Cleavage; by CASP3 in vitro" evidence="4">
    <location>
        <begin position="478"/>
        <end position="479"/>
    </location>
</feature>
<feature type="site" description="Cleavage; by CASP3 in vitro" evidence="4">
    <location>
        <begin position="984"/>
        <end position="985"/>
    </location>
</feature>
<feature type="modified residue" description="Phosphoserine; by autocatalysis" evidence="4">
    <location>
        <position position="222"/>
    </location>
</feature>
<feature type="modified residue" description="Phosphoserine; by autocatalysis" evidence="4">
    <location>
        <position position="234"/>
    </location>
</feature>
<feature type="modified residue" description="Phosphothreonine; by autocatalysis" evidence="4">
    <location>
        <position position="240"/>
    </location>
</feature>
<feature type="modified residue" description="Phosphoserine" evidence="22">
    <location>
        <position position="1127"/>
    </location>
</feature>
<feature type="modified residue" description="Phosphoserine" evidence="4">
    <location>
        <position position="1545"/>
    </location>
</feature>
<feature type="modified residue" description="Phosphoserine" evidence="4">
    <location>
        <position position="1611"/>
    </location>
</feature>
<feature type="modified residue" description="Phosphoserine" evidence="4">
    <location>
        <position position="1613"/>
    </location>
</feature>
<feature type="modified residue" description="Phosphoserine" evidence="4">
    <location>
        <position position="1629"/>
    </location>
</feature>
<feature type="modified residue" description="Phosphoserine" evidence="23">
    <location>
        <position position="1651"/>
    </location>
</feature>
<feature type="modified residue" description="Phosphoserine" evidence="4">
    <location>
        <position position="1664"/>
    </location>
</feature>
<feature type="modified residue" description="Phosphoserine" evidence="4">
    <location>
        <position position="1669"/>
    </location>
</feature>
<feature type="modified residue" description="Phosphoserine" evidence="4">
    <location>
        <position position="1693"/>
    </location>
</feature>
<feature type="modified residue" description="Phosphoserine" evidence="4">
    <location>
        <position position="1719"/>
    </location>
</feature>
<feature type="modified residue" description="Phosphoserine" evidence="23">
    <location>
        <position position="1721"/>
    </location>
</feature>
<feature type="mutagenesis site" description="Loss of kinase activity." evidence="18">
    <original>K</original>
    <variation>A</variation>
    <location>
        <position position="106"/>
    </location>
</feature>
<feature type="helix" evidence="24">
    <location>
        <begin position="3"/>
        <end position="16"/>
    </location>
</feature>
<feature type="helix" evidence="24">
    <location>
        <begin position="18"/>
        <end position="20"/>
    </location>
</feature>
<feature type="turn" evidence="24">
    <location>
        <begin position="21"/>
        <end position="23"/>
    </location>
</feature>
<feature type="helix" evidence="24">
    <location>
        <begin position="28"/>
        <end position="43"/>
    </location>
</feature>
<feature type="turn" evidence="24">
    <location>
        <begin position="46"/>
        <end position="49"/>
    </location>
</feature>
<feature type="helix" evidence="24">
    <location>
        <begin position="51"/>
        <end position="70"/>
    </location>
</feature>
<feature type="helix" evidence="24">
    <location>
        <begin position="74"/>
        <end position="76"/>
    </location>
</feature>
<feature type="strand" evidence="24">
    <location>
        <begin position="77"/>
        <end position="85"/>
    </location>
</feature>
<feature type="strand" evidence="24">
    <location>
        <begin position="87"/>
        <end position="96"/>
    </location>
</feature>
<feature type="turn" evidence="24">
    <location>
        <begin position="97"/>
        <end position="99"/>
    </location>
</feature>
<feature type="strand" evidence="24">
    <location>
        <begin position="102"/>
        <end position="109"/>
    </location>
</feature>
<feature type="helix" evidence="24">
    <location>
        <begin position="110"/>
        <end position="115"/>
    </location>
</feature>
<feature type="turn" evidence="24">
    <location>
        <begin position="116"/>
        <end position="119"/>
    </location>
</feature>
<feature type="helix" evidence="24">
    <location>
        <begin position="122"/>
        <end position="131"/>
    </location>
</feature>
<feature type="turn" evidence="24">
    <location>
        <begin position="134"/>
        <end position="136"/>
    </location>
</feature>
<feature type="strand" evidence="24">
    <location>
        <begin position="140"/>
        <end position="145"/>
    </location>
</feature>
<feature type="strand" evidence="24">
    <location>
        <begin position="147"/>
        <end position="154"/>
    </location>
</feature>
<feature type="helix" evidence="24">
    <location>
        <begin position="162"/>
        <end position="167"/>
    </location>
</feature>
<feature type="turn" evidence="24">
    <location>
        <begin position="168"/>
        <end position="171"/>
    </location>
</feature>
<feature type="helix" evidence="24">
    <location>
        <begin position="175"/>
        <end position="194"/>
    </location>
</feature>
<feature type="helix" evidence="24">
    <location>
        <begin position="204"/>
        <end position="206"/>
    </location>
</feature>
<feature type="strand" evidence="24">
    <location>
        <begin position="207"/>
        <end position="209"/>
    </location>
</feature>
<feature type="strand" evidence="24">
    <location>
        <begin position="215"/>
        <end position="217"/>
    </location>
</feature>
<feature type="helix" evidence="24">
    <location>
        <begin position="241"/>
        <end position="243"/>
    </location>
</feature>
<feature type="helix" evidence="24">
    <location>
        <begin position="246"/>
        <end position="253"/>
    </location>
</feature>
<feature type="helix" evidence="24">
    <location>
        <begin position="262"/>
        <end position="277"/>
    </location>
</feature>
<feature type="helix" evidence="24">
    <location>
        <begin position="287"/>
        <end position="295"/>
    </location>
</feature>
<feature type="helix" evidence="24">
    <location>
        <begin position="297"/>
        <end position="300"/>
    </location>
</feature>
<feature type="helix" evidence="24">
    <location>
        <begin position="312"/>
        <end position="319"/>
    </location>
</feature>
<feature type="helix" evidence="24">
    <location>
        <begin position="325"/>
        <end position="327"/>
    </location>
</feature>
<feature type="turn" evidence="24">
    <location>
        <begin position="329"/>
        <end position="334"/>
    </location>
</feature>
<feature type="helix" evidence="24">
    <location>
        <begin position="335"/>
        <end position="338"/>
    </location>
</feature>
<feature type="helix" evidence="24">
    <location>
        <begin position="341"/>
        <end position="343"/>
    </location>
</feature>
<feature type="turn" evidence="24">
    <location>
        <begin position="348"/>
        <end position="350"/>
    </location>
</feature>
<feature type="helix" evidence="24">
    <location>
        <begin position="351"/>
        <end position="353"/>
    </location>
</feature>
<feature type="helix" evidence="24">
    <location>
        <begin position="397"/>
        <end position="399"/>
    </location>
</feature>
<feature type="strand" evidence="24">
    <location>
        <begin position="404"/>
        <end position="407"/>
    </location>
</feature>
<protein>
    <recommendedName>
        <fullName>Serine/threonine-protein kinase MRCK alpha</fullName>
        <ecNumber>2.7.11.1</ecNumber>
    </recommendedName>
    <alternativeName>
        <fullName>CDC42-binding protein kinase alpha</fullName>
    </alternativeName>
    <alternativeName>
        <fullName>Myotonic dystrophy kinase-related CDC42-binding kinase alpha</fullName>
        <shortName>MRCK alpha</shortName>
        <shortName>Myotonic dystrophy protein kinase-like alpha</shortName>
    </alternativeName>
</protein>
<sequence>MSGEVRLRQLEQFILDGPAQTNGQCFSVETLLDILICLYDECNNSPLRREKNILEYLEWAKPFTSKVKQMRLHREDFEILKVIGRGAFGEVAVVKLKNADKVFAMKILNKWEMLKRAETACFREERDVLVNGDSKWITTLHYAFQDDNNLYLVMDYYVGGDLLTLLSKFEDRLPEEMARFYLAEMVIAIDSVHQLHYVHRDIKPDNILMDMNGHIRLADFGSCLKLMEDGTVQSSVAVGTPDYISPEILQAMEDGKGRYGPECDWWSLGVCMYEMLYGETPFYAESLVETYGKIMNHKERFQFPTQVTDVSENAKDLIRRLICSREHRLGQNGIEDFKKHPFFSGIDWDNIRNCEAPYIPEVSSPTDTSNFDVDDDCLKNSETMPPPTHTAFSGHHLPFVGFTYTSSCVLSDRSCLRVTAGPTSLDLDVNVQRTLDNNLATEAYERRIKRLEQEKLELTRKLQESTQTVQALQYSTVDGPLTASKDLEIKSLKEEIEKLRKQVAEVNHLEQQLEEANSVRRELDDAFRQIKAFEKQIKTLQQEREELNKELVQASERLKNQSKELKDAHCQRKLAMQEFMEINERLTELHTQKQKLARHVRDKEEEVDLVMQKAESLRQELRRAERAKKELEVHTEALIAEASKDRKLREQSRHYSKQLENELEGLKQKQISYSPGICSIEHQQEITKLKTDLEKKSIFYEEEISKREGIHASEIKNLKKELHDSEGQQLALNKEIMVLKDKLEKTRRESQSEREEFENEFKQQYEREKVLLTEENKKLTSELDKLTSLYESLSLRNQHLEEEVKDLADKKESVAHWEAQITEIIQWVSDEKDARGYLQALASKMTEELEALRNSSLGTRATDMPWKMRRFAKLDMSARLELQSALDAEIRAKQAIQEELNKVKASNIITECKLKDSEKKNLELLSEIEQLIKDTEELRSEKGVEHRDSQHSFLAFLNTPTDALDQFERSPSCTPAGKGRRIADSAPLPVHTPTLRKKGCPASAGFPPKRKTHQFFVKSFTAPTKCHQCTSLMVGLIRQGCSCEVCGFSCHITCVNKAPTTCPVPPEQTKGPLGIDPQKGVGTAYEGHVRIPKPAGVKKGWQRALAVVCDFKLFLYDIAEGKASQPSSVISQVIDMRDEEFSVSSVLASDVIHASRKDIPCIFRVTASQLSAPSDKCSILMLADSETERSKWVGVLSELHKVLKKNKFRDRSVYVPKEAYDSTLPLIKTTQAAAIIDHERVALGNEEGLFVVHVTKDEIIRVGDNKKIHQIELIPSDQLVAVISGRNRHVRLFPMSALDGRETDFYKLAETKGCQTIAAGKVRHGALSCLCVAMKRQVLCYELFQSKTRHRKFKEIQVPCNVQWMAIFSEHLCVGFQSGFLRYPLNGEGSPCNMLHSNDHTLAFITHQPMDAICAVEISNKEYLLCFSSIGIYTDCQGRRSRQQELMWPANPSSCCYNAPYLSIYSENAVDIFDVNSMEWIQTLPLKKVRPLNTEGSLNLLGLETIRLIYFKNKMAEGDELVVPETSDNSRKQMVRNINNKRRYSFRVPEEERMQQRREMLRDPEMRNKLISNPTNFNHIAHMGPGDGIQILKDLPMNPRPQESRTVFSGSVSIPSITKSRPEPGRSMSASSGLSARSSAQNGSALKREFSGGSYNTKRQPMPSPSEGSLSSGGVDQGSDAPVRDYDGEDSDSPRHSTASNSSNLSSPPSPVSPRKTKSLSLESTDRGSWDP</sequence>
<accession>O54874</accession>
<keyword id="KW-0002">3D-structure</keyword>
<keyword id="KW-0025">Alternative splicing</keyword>
<keyword id="KW-0067">ATP-binding</keyword>
<keyword id="KW-0966">Cell projection</keyword>
<keyword id="KW-0175">Coiled coil</keyword>
<keyword id="KW-0963">Cytoplasm</keyword>
<keyword id="KW-0418">Kinase</keyword>
<keyword id="KW-0460">Magnesium</keyword>
<keyword id="KW-0479">Metal-binding</keyword>
<keyword id="KW-0547">Nucleotide-binding</keyword>
<keyword id="KW-0597">Phosphoprotein</keyword>
<keyword id="KW-1185">Reference proteome</keyword>
<keyword id="KW-0723">Serine/threonine-protein kinase</keyword>
<keyword id="KW-0808">Transferase</keyword>
<keyword id="KW-0862">Zinc</keyword>
<keyword id="KW-0863">Zinc-finger</keyword>
<proteinExistence type="evidence at protein level"/>
<dbReference type="EC" id="2.7.11.1"/>
<dbReference type="EMBL" id="AF021935">
    <property type="protein sequence ID" value="AAC02941.1"/>
    <property type="molecule type" value="mRNA"/>
</dbReference>
<dbReference type="PIR" id="T14039">
    <property type="entry name" value="T14039"/>
</dbReference>
<dbReference type="RefSeq" id="NP_446109.1">
    <property type="nucleotide sequence ID" value="NM_053657.1"/>
</dbReference>
<dbReference type="PDB" id="4AW2">
    <property type="method" value="X-ray"/>
    <property type="resolution" value="1.70 A"/>
    <property type="chains" value="A=2-424"/>
</dbReference>
<dbReference type="PDBsum" id="4AW2"/>
<dbReference type="SMR" id="O54874"/>
<dbReference type="FunCoup" id="O54874">
    <property type="interactions" value="2704"/>
</dbReference>
<dbReference type="IntAct" id="O54874">
    <property type="interactions" value="8"/>
</dbReference>
<dbReference type="MINT" id="O54874"/>
<dbReference type="STRING" id="10116.ENSRNOP00000003837"/>
<dbReference type="CarbonylDB" id="O54874"/>
<dbReference type="iPTMnet" id="O54874"/>
<dbReference type="PhosphoSitePlus" id="O54874"/>
<dbReference type="jPOST" id="O54874"/>
<dbReference type="PaxDb" id="10116-ENSRNOP00000003837"/>
<dbReference type="GeneID" id="114116"/>
<dbReference type="KEGG" id="rno:114116"/>
<dbReference type="UCSC" id="RGD:621406">
    <molecule id="O54874-1"/>
    <property type="organism name" value="rat"/>
</dbReference>
<dbReference type="AGR" id="RGD:621406"/>
<dbReference type="CTD" id="8476"/>
<dbReference type="RGD" id="621406">
    <property type="gene designation" value="Cdc42bpa"/>
</dbReference>
<dbReference type="eggNOG" id="KOG0612">
    <property type="taxonomic scope" value="Eukaryota"/>
</dbReference>
<dbReference type="InParanoid" id="O54874"/>
<dbReference type="PhylomeDB" id="O54874"/>
<dbReference type="Reactome" id="R-RNO-9013149">
    <property type="pathway name" value="RAC1 GTPase cycle"/>
</dbReference>
<dbReference type="Reactome" id="R-RNO-9013406">
    <property type="pathway name" value="RHOQ GTPase cycle"/>
</dbReference>
<dbReference type="EvolutionaryTrace" id="O54874"/>
<dbReference type="PRO" id="PR:O54874"/>
<dbReference type="Proteomes" id="UP000002494">
    <property type="component" value="Unplaced"/>
</dbReference>
<dbReference type="GO" id="GO:0042641">
    <property type="term" value="C:actomyosin"/>
    <property type="evidence" value="ECO:0000314"/>
    <property type="project" value="UniProtKB"/>
</dbReference>
<dbReference type="GO" id="GO:0031252">
    <property type="term" value="C:cell leading edge"/>
    <property type="evidence" value="ECO:0000314"/>
    <property type="project" value="UniProtKB"/>
</dbReference>
<dbReference type="GO" id="GO:0005911">
    <property type="term" value="C:cell-cell junction"/>
    <property type="evidence" value="ECO:0000314"/>
    <property type="project" value="UniProtKB"/>
</dbReference>
<dbReference type="GO" id="GO:0005737">
    <property type="term" value="C:cytoplasm"/>
    <property type="evidence" value="ECO:0000318"/>
    <property type="project" value="GO_Central"/>
</dbReference>
<dbReference type="GO" id="GO:0005856">
    <property type="term" value="C:cytoskeleton"/>
    <property type="evidence" value="ECO:0000318"/>
    <property type="project" value="GO_Central"/>
</dbReference>
<dbReference type="GO" id="GO:0030027">
    <property type="term" value="C:lamellipodium"/>
    <property type="evidence" value="ECO:0000250"/>
    <property type="project" value="UniProtKB"/>
</dbReference>
<dbReference type="GO" id="GO:0005524">
    <property type="term" value="F:ATP binding"/>
    <property type="evidence" value="ECO:0000314"/>
    <property type="project" value="UniProtKB"/>
</dbReference>
<dbReference type="GO" id="GO:0042802">
    <property type="term" value="F:identical protein binding"/>
    <property type="evidence" value="ECO:0000353"/>
    <property type="project" value="UniProtKB"/>
</dbReference>
<dbReference type="GO" id="GO:0000287">
    <property type="term" value="F:magnesium ion binding"/>
    <property type="evidence" value="ECO:0000314"/>
    <property type="project" value="UniProtKB"/>
</dbReference>
<dbReference type="GO" id="GO:0106310">
    <property type="term" value="F:protein serine kinase activity"/>
    <property type="evidence" value="ECO:0007669"/>
    <property type="project" value="RHEA"/>
</dbReference>
<dbReference type="GO" id="GO:0004674">
    <property type="term" value="F:protein serine/threonine kinase activity"/>
    <property type="evidence" value="ECO:0000314"/>
    <property type="project" value="UniProtKB"/>
</dbReference>
<dbReference type="GO" id="GO:0008270">
    <property type="term" value="F:zinc ion binding"/>
    <property type="evidence" value="ECO:0007669"/>
    <property type="project" value="UniProtKB-KW"/>
</dbReference>
<dbReference type="GO" id="GO:0030036">
    <property type="term" value="P:actin cytoskeleton organization"/>
    <property type="evidence" value="ECO:0000314"/>
    <property type="project" value="UniProtKB"/>
</dbReference>
<dbReference type="GO" id="GO:0031032">
    <property type="term" value="P:actomyosin structure organization"/>
    <property type="evidence" value="ECO:0000315"/>
    <property type="project" value="UniProtKB"/>
</dbReference>
<dbReference type="GO" id="GO:0016477">
    <property type="term" value="P:cell migration"/>
    <property type="evidence" value="ECO:0000315"/>
    <property type="project" value="UniProtKB"/>
</dbReference>
<dbReference type="GO" id="GO:0007010">
    <property type="term" value="P:cytoskeleton organization"/>
    <property type="evidence" value="ECO:0000314"/>
    <property type="project" value="RGD"/>
</dbReference>
<dbReference type="GO" id="GO:0000226">
    <property type="term" value="P:microtubule cytoskeleton organization"/>
    <property type="evidence" value="ECO:0000266"/>
    <property type="project" value="RGD"/>
</dbReference>
<dbReference type="GO" id="GO:0007097">
    <property type="term" value="P:nuclear migration"/>
    <property type="evidence" value="ECO:0000266"/>
    <property type="project" value="RGD"/>
</dbReference>
<dbReference type="GO" id="GO:0006468">
    <property type="term" value="P:protein phosphorylation"/>
    <property type="evidence" value="ECO:0000314"/>
    <property type="project" value="UniProtKB"/>
</dbReference>
<dbReference type="GO" id="GO:0051056">
    <property type="term" value="P:regulation of small GTPase mediated signal transduction"/>
    <property type="evidence" value="ECO:0000314"/>
    <property type="project" value="UniProtKB"/>
</dbReference>
<dbReference type="CDD" id="cd00132">
    <property type="entry name" value="CRIB"/>
    <property type="match status" value="1"/>
</dbReference>
<dbReference type="CDD" id="cd01243">
    <property type="entry name" value="PH_MRCK"/>
    <property type="match status" value="1"/>
</dbReference>
<dbReference type="CDD" id="cd05623">
    <property type="entry name" value="STKc_MRCK_alpha"/>
    <property type="match status" value="1"/>
</dbReference>
<dbReference type="FunFam" id="1.10.510.10:FF:000014">
    <property type="entry name" value="Non-specific serine/threonine protein kinase"/>
    <property type="match status" value="1"/>
</dbReference>
<dbReference type="FunFam" id="1.20.5.340:FF:000010">
    <property type="entry name" value="Non-specific serine/threonine protein kinase"/>
    <property type="match status" value="1"/>
</dbReference>
<dbReference type="FunFam" id="2.30.29.30:FF:000032">
    <property type="entry name" value="Non-specific serine/threonine protein kinase"/>
    <property type="match status" value="1"/>
</dbReference>
<dbReference type="FunFam" id="3.30.60.20:FF:000005">
    <property type="entry name" value="Non-specific serine/threonine protein kinase"/>
    <property type="match status" value="1"/>
</dbReference>
<dbReference type="FunFam" id="3.30.200.20:FF:001055">
    <property type="entry name" value="Serine/threonine-protein kinase MRCK beta"/>
    <property type="match status" value="1"/>
</dbReference>
<dbReference type="Gene3D" id="1.10.287.1490">
    <property type="match status" value="1"/>
</dbReference>
<dbReference type="Gene3D" id="1.20.5.340">
    <property type="match status" value="1"/>
</dbReference>
<dbReference type="Gene3D" id="3.30.60.20">
    <property type="match status" value="1"/>
</dbReference>
<dbReference type="Gene3D" id="3.30.200.20">
    <property type="entry name" value="Phosphorylase Kinase, domain 1"/>
    <property type="match status" value="1"/>
</dbReference>
<dbReference type="Gene3D" id="2.30.29.30">
    <property type="entry name" value="Pleckstrin-homology domain (PH domain)/Phosphotyrosine-binding domain (PTB)"/>
    <property type="match status" value="1"/>
</dbReference>
<dbReference type="Gene3D" id="1.10.510.10">
    <property type="entry name" value="Transferase(Phosphotransferase) domain 1"/>
    <property type="match status" value="1"/>
</dbReference>
<dbReference type="InterPro" id="IPR000961">
    <property type="entry name" value="AGC-kinase_C"/>
</dbReference>
<dbReference type="InterPro" id="IPR046349">
    <property type="entry name" value="C1-like_sf"/>
</dbReference>
<dbReference type="InterPro" id="IPR001180">
    <property type="entry name" value="CNH_dom"/>
</dbReference>
<dbReference type="InterPro" id="IPR000095">
    <property type="entry name" value="CRIB_dom"/>
</dbReference>
<dbReference type="InterPro" id="IPR031597">
    <property type="entry name" value="KELK"/>
</dbReference>
<dbReference type="InterPro" id="IPR011009">
    <property type="entry name" value="Kinase-like_dom_sf"/>
</dbReference>
<dbReference type="InterPro" id="IPR026611">
    <property type="entry name" value="MRCK_alpha_cat"/>
</dbReference>
<dbReference type="InterPro" id="IPR014930">
    <property type="entry name" value="Myotonic_dystrophy_kinase_coil"/>
</dbReference>
<dbReference type="InterPro" id="IPR002219">
    <property type="entry name" value="PE/DAG-bd"/>
</dbReference>
<dbReference type="InterPro" id="IPR011993">
    <property type="entry name" value="PH-like_dom_sf"/>
</dbReference>
<dbReference type="InterPro" id="IPR001849">
    <property type="entry name" value="PH_domain"/>
</dbReference>
<dbReference type="InterPro" id="IPR017892">
    <property type="entry name" value="Pkinase_C"/>
</dbReference>
<dbReference type="InterPro" id="IPR000719">
    <property type="entry name" value="Prot_kinase_dom"/>
</dbReference>
<dbReference type="InterPro" id="IPR017441">
    <property type="entry name" value="Protein_kinase_ATP_BS"/>
</dbReference>
<dbReference type="InterPro" id="IPR050839">
    <property type="entry name" value="Rho-assoc_Ser/Thr_Kinase"/>
</dbReference>
<dbReference type="InterPro" id="IPR008271">
    <property type="entry name" value="Ser/Thr_kinase_AS"/>
</dbReference>
<dbReference type="PANTHER" id="PTHR22988">
    <property type="entry name" value="MYOTONIC DYSTROPHY S/T KINASE-RELATED"/>
    <property type="match status" value="1"/>
</dbReference>
<dbReference type="PANTHER" id="PTHR22988:SF31">
    <property type="entry name" value="SERINE_THREONINE-PROTEIN KINASE MRCK ALPHA"/>
    <property type="match status" value="1"/>
</dbReference>
<dbReference type="Pfam" id="PF00130">
    <property type="entry name" value="C1_1"/>
    <property type="match status" value="1"/>
</dbReference>
<dbReference type="Pfam" id="PF00780">
    <property type="entry name" value="CNH"/>
    <property type="match status" value="1"/>
</dbReference>
<dbReference type="Pfam" id="PF08826">
    <property type="entry name" value="DMPK_coil"/>
    <property type="match status" value="1"/>
</dbReference>
<dbReference type="Pfam" id="PF15796">
    <property type="entry name" value="KELK"/>
    <property type="match status" value="1"/>
</dbReference>
<dbReference type="Pfam" id="PF25346">
    <property type="entry name" value="PH_MRCK"/>
    <property type="match status" value="1"/>
</dbReference>
<dbReference type="Pfam" id="PF00069">
    <property type="entry name" value="Pkinase"/>
    <property type="match status" value="1"/>
</dbReference>
<dbReference type="Pfam" id="PF00433">
    <property type="entry name" value="Pkinase_C"/>
    <property type="match status" value="1"/>
</dbReference>
<dbReference type="SMART" id="SM00109">
    <property type="entry name" value="C1"/>
    <property type="match status" value="1"/>
</dbReference>
<dbReference type="SMART" id="SM00036">
    <property type="entry name" value="CNH"/>
    <property type="match status" value="1"/>
</dbReference>
<dbReference type="SMART" id="SM00285">
    <property type="entry name" value="PBD"/>
    <property type="match status" value="1"/>
</dbReference>
<dbReference type="SMART" id="SM00233">
    <property type="entry name" value="PH"/>
    <property type="match status" value="1"/>
</dbReference>
<dbReference type="SMART" id="SM00133">
    <property type="entry name" value="S_TK_X"/>
    <property type="match status" value="1"/>
</dbReference>
<dbReference type="SMART" id="SM00220">
    <property type="entry name" value="S_TKc"/>
    <property type="match status" value="1"/>
</dbReference>
<dbReference type="SUPFAM" id="SSF57889">
    <property type="entry name" value="Cysteine-rich domain"/>
    <property type="match status" value="1"/>
</dbReference>
<dbReference type="SUPFAM" id="SSF50729">
    <property type="entry name" value="PH domain-like"/>
    <property type="match status" value="1"/>
</dbReference>
<dbReference type="SUPFAM" id="SSF56112">
    <property type="entry name" value="Protein kinase-like (PK-like)"/>
    <property type="match status" value="1"/>
</dbReference>
<dbReference type="SUPFAM" id="SSF69322">
    <property type="entry name" value="Tricorn protease domain 2"/>
    <property type="match status" value="1"/>
</dbReference>
<dbReference type="PROSITE" id="PS51285">
    <property type="entry name" value="AGC_KINASE_CTER"/>
    <property type="match status" value="1"/>
</dbReference>
<dbReference type="PROSITE" id="PS50219">
    <property type="entry name" value="CNH"/>
    <property type="match status" value="1"/>
</dbReference>
<dbReference type="PROSITE" id="PS50108">
    <property type="entry name" value="CRIB"/>
    <property type="match status" value="1"/>
</dbReference>
<dbReference type="PROSITE" id="PS50003">
    <property type="entry name" value="PH_DOMAIN"/>
    <property type="match status" value="1"/>
</dbReference>
<dbReference type="PROSITE" id="PS00107">
    <property type="entry name" value="PROTEIN_KINASE_ATP"/>
    <property type="match status" value="1"/>
</dbReference>
<dbReference type="PROSITE" id="PS50011">
    <property type="entry name" value="PROTEIN_KINASE_DOM"/>
    <property type="match status" value="1"/>
</dbReference>
<dbReference type="PROSITE" id="PS00108">
    <property type="entry name" value="PROTEIN_KINASE_ST"/>
    <property type="match status" value="1"/>
</dbReference>
<dbReference type="PROSITE" id="PS00479">
    <property type="entry name" value="ZF_DAG_PE_1"/>
    <property type="match status" value="1"/>
</dbReference>
<dbReference type="PROSITE" id="PS50081">
    <property type="entry name" value="ZF_DAG_PE_2"/>
    <property type="match status" value="1"/>
</dbReference>
<evidence type="ECO:0000250" key="1"/>
<evidence type="ECO:0000250" key="2">
    <source>
        <dbReference type="UniProtKB" id="P54265"/>
    </source>
</evidence>
<evidence type="ECO:0000250" key="3">
    <source>
        <dbReference type="UniProtKB" id="Q3UU96"/>
    </source>
</evidence>
<evidence type="ECO:0000250" key="4">
    <source>
        <dbReference type="UniProtKB" id="Q5VT25"/>
    </source>
</evidence>
<evidence type="ECO:0000255" key="5"/>
<evidence type="ECO:0000255" key="6">
    <source>
        <dbReference type="PROSITE-ProRule" id="PRU00057"/>
    </source>
</evidence>
<evidence type="ECO:0000255" key="7">
    <source>
        <dbReference type="PROSITE-ProRule" id="PRU00145"/>
    </source>
</evidence>
<evidence type="ECO:0000255" key="8">
    <source>
        <dbReference type="PROSITE-ProRule" id="PRU00159"/>
    </source>
</evidence>
<evidence type="ECO:0000255" key="9">
    <source>
        <dbReference type="PROSITE-ProRule" id="PRU00226"/>
    </source>
</evidence>
<evidence type="ECO:0000255" key="10">
    <source>
        <dbReference type="PROSITE-ProRule" id="PRU00618"/>
    </source>
</evidence>
<evidence type="ECO:0000255" key="11">
    <source>
        <dbReference type="PROSITE-ProRule" id="PRU00795"/>
    </source>
</evidence>
<evidence type="ECO:0000255" key="12">
    <source>
        <dbReference type="PROSITE-ProRule" id="PRU10027"/>
    </source>
</evidence>
<evidence type="ECO:0000256" key="13">
    <source>
        <dbReference type="SAM" id="MobiDB-lite"/>
    </source>
</evidence>
<evidence type="ECO:0000269" key="14">
    <source>
    </source>
</evidence>
<evidence type="ECO:0000269" key="15">
    <source>
    </source>
</evidence>
<evidence type="ECO:0000269" key="16">
    <source>
    </source>
</evidence>
<evidence type="ECO:0000269" key="17">
    <source>
    </source>
</evidence>
<evidence type="ECO:0000269" key="18">
    <source>
    </source>
</evidence>
<evidence type="ECO:0000305" key="19"/>
<evidence type="ECO:0000312" key="20">
    <source>
        <dbReference type="EMBL" id="AAC02941.1"/>
    </source>
</evidence>
<evidence type="ECO:0000312" key="21">
    <source>
        <dbReference type="RGD" id="621406"/>
    </source>
</evidence>
<evidence type="ECO:0007744" key="22">
    <source>
    </source>
</evidence>
<evidence type="ECO:0007744" key="23">
    <source>
    </source>
</evidence>
<evidence type="ECO:0007829" key="24">
    <source>
        <dbReference type="PDB" id="4AW2"/>
    </source>
</evidence>